<protein>
    <recommendedName>
        <fullName evidence="1">ATP-dependent protease subunit HslV</fullName>
        <ecNumber evidence="1">3.4.25.2</ecNumber>
    </recommendedName>
</protein>
<reference key="1">
    <citation type="journal article" date="2001" name="Lancet">
        <title>Whole genome sequencing of meticillin-resistant Staphylococcus aureus.</title>
        <authorList>
            <person name="Kuroda M."/>
            <person name="Ohta T."/>
            <person name="Uchiyama I."/>
            <person name="Baba T."/>
            <person name="Yuzawa H."/>
            <person name="Kobayashi I."/>
            <person name="Cui L."/>
            <person name="Oguchi A."/>
            <person name="Aoki K."/>
            <person name="Nagai Y."/>
            <person name="Lian J.-Q."/>
            <person name="Ito T."/>
            <person name="Kanamori M."/>
            <person name="Matsumaru H."/>
            <person name="Maruyama A."/>
            <person name="Murakami H."/>
            <person name="Hosoyama A."/>
            <person name="Mizutani-Ui Y."/>
            <person name="Takahashi N.K."/>
            <person name="Sawano T."/>
            <person name="Inoue R."/>
            <person name="Kaito C."/>
            <person name="Sekimizu K."/>
            <person name="Hirakawa H."/>
            <person name="Kuhara S."/>
            <person name="Goto S."/>
            <person name="Yabuzaki J."/>
            <person name="Kanehisa M."/>
            <person name="Yamashita A."/>
            <person name="Oshima K."/>
            <person name="Furuya K."/>
            <person name="Yoshino C."/>
            <person name="Shiba T."/>
            <person name="Hattori M."/>
            <person name="Ogasawara N."/>
            <person name="Hayashi H."/>
            <person name="Hiramatsu K."/>
        </authorList>
    </citation>
    <scope>NUCLEOTIDE SEQUENCE [LARGE SCALE GENOMIC DNA]</scope>
    <source>
        <strain>Mu50 / ATCC 700699</strain>
    </source>
</reference>
<gene>
    <name evidence="1" type="primary">hslV</name>
    <name type="synonym">clpQ</name>
    <name type="ordered locus">SAV1253</name>
</gene>
<accession>P65796</accession>
<accession>Q99UL8</accession>
<feature type="chain" id="PRO_0000148147" description="ATP-dependent protease subunit HslV">
    <location>
        <begin position="1"/>
        <end position="181"/>
    </location>
</feature>
<feature type="active site" evidence="1">
    <location>
        <position position="9"/>
    </location>
</feature>
<feature type="binding site" evidence="1">
    <location>
        <position position="166"/>
    </location>
    <ligand>
        <name>Na(+)</name>
        <dbReference type="ChEBI" id="CHEBI:29101"/>
    </ligand>
</feature>
<feature type="binding site" evidence="1">
    <location>
        <position position="169"/>
    </location>
    <ligand>
        <name>Na(+)</name>
        <dbReference type="ChEBI" id="CHEBI:29101"/>
    </ligand>
</feature>
<feature type="binding site" evidence="1">
    <location>
        <position position="172"/>
    </location>
    <ligand>
        <name>Na(+)</name>
        <dbReference type="ChEBI" id="CHEBI:29101"/>
    </ligand>
</feature>
<feature type="strand" evidence="2">
    <location>
        <begin position="10"/>
        <end position="16"/>
    </location>
</feature>
<feature type="strand" evidence="2">
    <location>
        <begin position="19"/>
        <end position="24"/>
    </location>
</feature>
<feature type="strand" evidence="2">
    <location>
        <begin position="28"/>
        <end position="30"/>
    </location>
</feature>
<feature type="turn" evidence="2">
    <location>
        <begin position="31"/>
        <end position="33"/>
    </location>
</feature>
<feature type="strand" evidence="2">
    <location>
        <begin position="34"/>
        <end position="39"/>
    </location>
</feature>
<feature type="strand" evidence="2">
    <location>
        <begin position="43"/>
        <end position="46"/>
    </location>
</feature>
<feature type="turn" evidence="2">
    <location>
        <begin position="47"/>
        <end position="50"/>
    </location>
</feature>
<feature type="strand" evidence="2">
    <location>
        <begin position="51"/>
        <end position="55"/>
    </location>
</feature>
<feature type="helix" evidence="2">
    <location>
        <begin position="59"/>
        <end position="75"/>
    </location>
</feature>
<feature type="turn" evidence="2">
    <location>
        <begin position="76"/>
        <end position="78"/>
    </location>
</feature>
<feature type="helix" evidence="2">
    <location>
        <begin position="80"/>
        <end position="93"/>
    </location>
</feature>
<feature type="turn" evidence="2">
    <location>
        <begin position="95"/>
        <end position="99"/>
    </location>
</feature>
<feature type="strand" evidence="2">
    <location>
        <begin position="104"/>
        <end position="107"/>
    </location>
</feature>
<feature type="strand" evidence="2">
    <location>
        <begin position="112"/>
        <end position="115"/>
    </location>
</feature>
<feature type="helix" evidence="2">
    <location>
        <begin position="125"/>
        <end position="127"/>
    </location>
</feature>
<feature type="strand" evidence="2">
    <location>
        <begin position="128"/>
        <end position="132"/>
    </location>
</feature>
<feature type="helix" evidence="2">
    <location>
        <begin position="135"/>
        <end position="148"/>
    </location>
</feature>
<feature type="helix" evidence="2">
    <location>
        <begin position="154"/>
        <end position="168"/>
    </location>
</feature>
<feature type="strand" evidence="2">
    <location>
        <begin position="177"/>
        <end position="180"/>
    </location>
</feature>
<keyword id="KW-0002">3D-structure</keyword>
<keyword id="KW-0021">Allosteric enzyme</keyword>
<keyword id="KW-0963">Cytoplasm</keyword>
<keyword id="KW-0378">Hydrolase</keyword>
<keyword id="KW-0479">Metal-binding</keyword>
<keyword id="KW-0645">Protease</keyword>
<keyword id="KW-0915">Sodium</keyword>
<keyword id="KW-0888">Threonine protease</keyword>
<proteinExistence type="evidence at protein level"/>
<name>HSLV_STAAM</name>
<evidence type="ECO:0000255" key="1">
    <source>
        <dbReference type="HAMAP-Rule" id="MF_00248"/>
    </source>
</evidence>
<evidence type="ECO:0007829" key="2">
    <source>
        <dbReference type="PDB" id="6KR1"/>
    </source>
</evidence>
<sequence>MSNTTLHATTIYAVRHNGKAAMAGDGQVTLGQQVIMKQTARKVRRLYEGKVLAGFAGSVADAFTLFEKFETKLQQFSGNLERAAVELAQEWRGDKQLRQLEAMLIVMDKDAILVVSGTGEVIAPDDDLIAIGSGGNYALSAGRALKRHASHLSAEEMAYESLKVAADICVFTNDNIVVETL</sequence>
<comment type="function">
    <text evidence="1">Protease subunit of a proteasome-like degradation complex believed to be a general protein degrading machinery.</text>
</comment>
<comment type="catalytic activity">
    <reaction evidence="1">
        <text>ATP-dependent cleavage of peptide bonds with broad specificity.</text>
        <dbReference type="EC" id="3.4.25.2"/>
    </reaction>
</comment>
<comment type="activity regulation">
    <text evidence="1">Allosterically activated by HslU binding.</text>
</comment>
<comment type="subunit">
    <text evidence="1">A double ring-shaped homohexamer of HslV is capped on each side by a ring-shaped HslU homohexamer. The assembly of the HslU/HslV complex is dependent on binding of ATP.</text>
</comment>
<comment type="subcellular location">
    <subcellularLocation>
        <location evidence="1">Cytoplasm</location>
    </subcellularLocation>
</comment>
<comment type="similarity">
    <text evidence="1">Belongs to the peptidase T1B family. HslV subfamily.</text>
</comment>
<organism>
    <name type="scientific">Staphylococcus aureus (strain Mu50 / ATCC 700699)</name>
    <dbReference type="NCBI Taxonomy" id="158878"/>
    <lineage>
        <taxon>Bacteria</taxon>
        <taxon>Bacillati</taxon>
        <taxon>Bacillota</taxon>
        <taxon>Bacilli</taxon>
        <taxon>Bacillales</taxon>
        <taxon>Staphylococcaceae</taxon>
        <taxon>Staphylococcus</taxon>
    </lineage>
</organism>
<dbReference type="EC" id="3.4.25.2" evidence="1"/>
<dbReference type="EMBL" id="BA000017">
    <property type="protein sequence ID" value="BAB57415.1"/>
    <property type="molecule type" value="Genomic_DNA"/>
</dbReference>
<dbReference type="RefSeq" id="WP_000072681.1">
    <property type="nucleotide sequence ID" value="NC_002758.2"/>
</dbReference>
<dbReference type="PDB" id="6KR1">
    <property type="method" value="X-ray"/>
    <property type="resolution" value="2.00 A"/>
    <property type="chains" value="A/B/C/D/E/F/G/H/I/J/K/L=1-181"/>
</dbReference>
<dbReference type="PDB" id="6KUI">
    <property type="method" value="X-ray"/>
    <property type="resolution" value="2.33 A"/>
    <property type="chains" value="A/B/C=1-181"/>
</dbReference>
<dbReference type="PDBsum" id="6KR1"/>
<dbReference type="PDBsum" id="6KUI"/>
<dbReference type="SMR" id="P65796"/>
<dbReference type="MEROPS" id="T01.007"/>
<dbReference type="KEGG" id="sav:SAV1253"/>
<dbReference type="HOGENOM" id="CLU_093872_1_1_9"/>
<dbReference type="PhylomeDB" id="P65796"/>
<dbReference type="Proteomes" id="UP000002481">
    <property type="component" value="Chromosome"/>
</dbReference>
<dbReference type="GO" id="GO:0009376">
    <property type="term" value="C:HslUV protease complex"/>
    <property type="evidence" value="ECO:0007669"/>
    <property type="project" value="UniProtKB-UniRule"/>
</dbReference>
<dbReference type="GO" id="GO:0005839">
    <property type="term" value="C:proteasome core complex"/>
    <property type="evidence" value="ECO:0007669"/>
    <property type="project" value="InterPro"/>
</dbReference>
<dbReference type="GO" id="GO:0046872">
    <property type="term" value="F:metal ion binding"/>
    <property type="evidence" value="ECO:0007669"/>
    <property type="project" value="UniProtKB-KW"/>
</dbReference>
<dbReference type="GO" id="GO:0004298">
    <property type="term" value="F:threonine-type endopeptidase activity"/>
    <property type="evidence" value="ECO:0007669"/>
    <property type="project" value="UniProtKB-KW"/>
</dbReference>
<dbReference type="GO" id="GO:0051603">
    <property type="term" value="P:proteolysis involved in protein catabolic process"/>
    <property type="evidence" value="ECO:0007669"/>
    <property type="project" value="InterPro"/>
</dbReference>
<dbReference type="CDD" id="cd01913">
    <property type="entry name" value="protease_HslV"/>
    <property type="match status" value="1"/>
</dbReference>
<dbReference type="Gene3D" id="3.60.20.10">
    <property type="entry name" value="Glutamine Phosphoribosylpyrophosphate, subunit 1, domain 1"/>
    <property type="match status" value="1"/>
</dbReference>
<dbReference type="HAMAP" id="MF_00248">
    <property type="entry name" value="HslV"/>
    <property type="match status" value="1"/>
</dbReference>
<dbReference type="InterPro" id="IPR022281">
    <property type="entry name" value="ATP-dep_Prtase_HsIV_su"/>
</dbReference>
<dbReference type="InterPro" id="IPR029055">
    <property type="entry name" value="Ntn_hydrolases_N"/>
</dbReference>
<dbReference type="InterPro" id="IPR001353">
    <property type="entry name" value="Proteasome_sua/b"/>
</dbReference>
<dbReference type="InterPro" id="IPR023333">
    <property type="entry name" value="Proteasome_suB-type"/>
</dbReference>
<dbReference type="NCBIfam" id="TIGR03692">
    <property type="entry name" value="ATP_dep_HslV"/>
    <property type="match status" value="1"/>
</dbReference>
<dbReference type="NCBIfam" id="NF003964">
    <property type="entry name" value="PRK05456.1"/>
    <property type="match status" value="1"/>
</dbReference>
<dbReference type="PANTHER" id="PTHR32194:SF0">
    <property type="entry name" value="ATP-DEPENDENT PROTEASE SUBUNIT HSLV"/>
    <property type="match status" value="1"/>
</dbReference>
<dbReference type="PANTHER" id="PTHR32194">
    <property type="entry name" value="METALLOPROTEASE TLDD"/>
    <property type="match status" value="1"/>
</dbReference>
<dbReference type="Pfam" id="PF00227">
    <property type="entry name" value="Proteasome"/>
    <property type="match status" value="1"/>
</dbReference>
<dbReference type="PIRSF" id="PIRSF039093">
    <property type="entry name" value="HslV"/>
    <property type="match status" value="1"/>
</dbReference>
<dbReference type="SUPFAM" id="SSF56235">
    <property type="entry name" value="N-terminal nucleophile aminohydrolases (Ntn hydrolases)"/>
    <property type="match status" value="1"/>
</dbReference>
<dbReference type="PROSITE" id="PS51476">
    <property type="entry name" value="PROTEASOME_BETA_2"/>
    <property type="match status" value="1"/>
</dbReference>